<sequence length="876" mass="97588">MARSGSCPHLLWDVRKRSLGLEDPSRLRSRYLGRREFIQRLKLEATLNVHDGCVNTICWNDTGEYILSGSDDTKLVISNPYSRKVLTTIRSGHRANIFSAKFLPCTDDKQIVSCSGDGVIFYTNIEQDAETNRQCQFTCHYGTTYEIMTVPNDPYTFLSCGEDGTVRWFDTRIKTSCTKEDCKDDILINCRRAATSVAICPPVPYYLAVGCSDSSVRIYDRRMLGTRATGNYAGRGTTGMVARFIPSHLSNKSCRVTSLCYSEDGQEILVSYSSDYIYLFDPKDDTARELKTPSAEERREELRQPPVKRLRLRGDWSDTGPRARPESERERDGEQSPNVSLMQRMSDMLSRWFEEASEVAQSNRGRGRPRPRGGTNQPDVSTLPTVPSSPNLEVCETAMDVDMPAALLQPSTSSTDPVQAQAATAAIESPRSSSLLSCPDSEPRQSVEASGHHAHHQSDNSNERLSPKPGTGEPVLSLHYSTEGTTTSTIKLNFTDEWSSTASSSRGNGSHCKSEGQEECLVPPSSVQPPEGDSETRAPEELSEKGTLPENLTQNQIDTAQLDNFPAEPLDSNSGEKNNPSQDSPCGLPEEGTLSETDRETCEQASTESATRHASTKPELPSQTEAIEQASTESATRHTSANPELPSQTEAIAPLAHEDPSARDSALQDTDDSDDDPVLIPGARYRTGPGDRRSAVARIQEFFRRRKERKEMEELDTLNIRRPLVKMVYKGHRNSRTMIKEANFWGANFVMSGSDCGHIFIWDRHTAEHLMLLEADNHVVNCLQPHPFDPILASSGIDYDIKIWSPLEESRIFNRKLADEVITRNELMLEETRNTITVPASFMLRMLASLNHIRADRLEGDRSEGSGQENENEDEE</sequence>
<reference key="1">
    <citation type="journal article" date="2005" name="Science">
        <title>The transcriptional landscape of the mammalian genome.</title>
        <authorList>
            <person name="Carninci P."/>
            <person name="Kasukawa T."/>
            <person name="Katayama S."/>
            <person name="Gough J."/>
            <person name="Frith M.C."/>
            <person name="Maeda N."/>
            <person name="Oyama R."/>
            <person name="Ravasi T."/>
            <person name="Lenhard B."/>
            <person name="Wells C."/>
            <person name="Kodzius R."/>
            <person name="Shimokawa K."/>
            <person name="Bajic V.B."/>
            <person name="Brenner S.E."/>
            <person name="Batalov S."/>
            <person name="Forrest A.R."/>
            <person name="Zavolan M."/>
            <person name="Davis M.J."/>
            <person name="Wilming L.G."/>
            <person name="Aidinis V."/>
            <person name="Allen J.E."/>
            <person name="Ambesi-Impiombato A."/>
            <person name="Apweiler R."/>
            <person name="Aturaliya R.N."/>
            <person name="Bailey T.L."/>
            <person name="Bansal M."/>
            <person name="Baxter L."/>
            <person name="Beisel K.W."/>
            <person name="Bersano T."/>
            <person name="Bono H."/>
            <person name="Chalk A.M."/>
            <person name="Chiu K.P."/>
            <person name="Choudhary V."/>
            <person name="Christoffels A."/>
            <person name="Clutterbuck D.R."/>
            <person name="Crowe M.L."/>
            <person name="Dalla E."/>
            <person name="Dalrymple B.P."/>
            <person name="de Bono B."/>
            <person name="Della Gatta G."/>
            <person name="di Bernardo D."/>
            <person name="Down T."/>
            <person name="Engstrom P."/>
            <person name="Fagiolini M."/>
            <person name="Faulkner G."/>
            <person name="Fletcher C.F."/>
            <person name="Fukushima T."/>
            <person name="Furuno M."/>
            <person name="Futaki S."/>
            <person name="Gariboldi M."/>
            <person name="Georgii-Hemming P."/>
            <person name="Gingeras T.R."/>
            <person name="Gojobori T."/>
            <person name="Green R.E."/>
            <person name="Gustincich S."/>
            <person name="Harbers M."/>
            <person name="Hayashi Y."/>
            <person name="Hensch T.K."/>
            <person name="Hirokawa N."/>
            <person name="Hill D."/>
            <person name="Huminiecki L."/>
            <person name="Iacono M."/>
            <person name="Ikeo K."/>
            <person name="Iwama A."/>
            <person name="Ishikawa T."/>
            <person name="Jakt M."/>
            <person name="Kanapin A."/>
            <person name="Katoh M."/>
            <person name="Kawasawa Y."/>
            <person name="Kelso J."/>
            <person name="Kitamura H."/>
            <person name="Kitano H."/>
            <person name="Kollias G."/>
            <person name="Krishnan S.P."/>
            <person name="Kruger A."/>
            <person name="Kummerfeld S.K."/>
            <person name="Kurochkin I.V."/>
            <person name="Lareau L.F."/>
            <person name="Lazarevic D."/>
            <person name="Lipovich L."/>
            <person name="Liu J."/>
            <person name="Liuni S."/>
            <person name="McWilliam S."/>
            <person name="Madan Babu M."/>
            <person name="Madera M."/>
            <person name="Marchionni L."/>
            <person name="Matsuda H."/>
            <person name="Matsuzawa S."/>
            <person name="Miki H."/>
            <person name="Mignone F."/>
            <person name="Miyake S."/>
            <person name="Morris K."/>
            <person name="Mottagui-Tabar S."/>
            <person name="Mulder N."/>
            <person name="Nakano N."/>
            <person name="Nakauchi H."/>
            <person name="Ng P."/>
            <person name="Nilsson R."/>
            <person name="Nishiguchi S."/>
            <person name="Nishikawa S."/>
            <person name="Nori F."/>
            <person name="Ohara O."/>
            <person name="Okazaki Y."/>
            <person name="Orlando V."/>
            <person name="Pang K.C."/>
            <person name="Pavan W.J."/>
            <person name="Pavesi G."/>
            <person name="Pesole G."/>
            <person name="Petrovsky N."/>
            <person name="Piazza S."/>
            <person name="Reed J."/>
            <person name="Reid J.F."/>
            <person name="Ring B.Z."/>
            <person name="Ringwald M."/>
            <person name="Rost B."/>
            <person name="Ruan Y."/>
            <person name="Salzberg S.L."/>
            <person name="Sandelin A."/>
            <person name="Schneider C."/>
            <person name="Schoenbach C."/>
            <person name="Sekiguchi K."/>
            <person name="Semple C.A."/>
            <person name="Seno S."/>
            <person name="Sessa L."/>
            <person name="Sheng Y."/>
            <person name="Shibata Y."/>
            <person name="Shimada H."/>
            <person name="Shimada K."/>
            <person name="Silva D."/>
            <person name="Sinclair B."/>
            <person name="Sperling S."/>
            <person name="Stupka E."/>
            <person name="Sugiura K."/>
            <person name="Sultana R."/>
            <person name="Takenaka Y."/>
            <person name="Taki K."/>
            <person name="Tammoja K."/>
            <person name="Tan S.L."/>
            <person name="Tang S."/>
            <person name="Taylor M.S."/>
            <person name="Tegner J."/>
            <person name="Teichmann S.A."/>
            <person name="Ueda H.R."/>
            <person name="van Nimwegen E."/>
            <person name="Verardo R."/>
            <person name="Wei C.L."/>
            <person name="Yagi K."/>
            <person name="Yamanishi H."/>
            <person name="Zabarovsky E."/>
            <person name="Zhu S."/>
            <person name="Zimmer A."/>
            <person name="Hide W."/>
            <person name="Bult C."/>
            <person name="Grimmond S.M."/>
            <person name="Teasdale R.D."/>
            <person name="Liu E.T."/>
            <person name="Brusic V."/>
            <person name="Quackenbush J."/>
            <person name="Wahlestedt C."/>
            <person name="Mattick J.S."/>
            <person name="Hume D.A."/>
            <person name="Kai C."/>
            <person name="Sasaki D."/>
            <person name="Tomaru Y."/>
            <person name="Fukuda S."/>
            <person name="Kanamori-Katayama M."/>
            <person name="Suzuki M."/>
            <person name="Aoki J."/>
            <person name="Arakawa T."/>
            <person name="Iida J."/>
            <person name="Imamura K."/>
            <person name="Itoh M."/>
            <person name="Kato T."/>
            <person name="Kawaji H."/>
            <person name="Kawagashira N."/>
            <person name="Kawashima T."/>
            <person name="Kojima M."/>
            <person name="Kondo S."/>
            <person name="Konno H."/>
            <person name="Nakano K."/>
            <person name="Ninomiya N."/>
            <person name="Nishio T."/>
            <person name="Okada M."/>
            <person name="Plessy C."/>
            <person name="Shibata K."/>
            <person name="Shiraki T."/>
            <person name="Suzuki S."/>
            <person name="Tagami M."/>
            <person name="Waki K."/>
            <person name="Watahiki A."/>
            <person name="Okamura-Oho Y."/>
            <person name="Suzuki H."/>
            <person name="Kawai J."/>
            <person name="Hayashizaki Y."/>
        </authorList>
    </citation>
    <scope>NUCLEOTIDE SEQUENCE [LARGE SCALE MRNA]</scope>
    <source>
        <strain>C57BL/6J</strain>
        <tissue>Lung</tissue>
        <tissue>Ovary</tissue>
        <tissue>Uterus</tissue>
    </source>
</reference>
<reference key="2">
    <citation type="journal article" date="2010" name="Cell">
        <title>A tissue-specific atlas of mouse protein phosphorylation and expression.</title>
        <authorList>
            <person name="Huttlin E.L."/>
            <person name="Jedrychowski M.P."/>
            <person name="Elias J.E."/>
            <person name="Goswami T."/>
            <person name="Rad R."/>
            <person name="Beausoleil S.A."/>
            <person name="Villen J."/>
            <person name="Haas W."/>
            <person name="Sowa M.E."/>
            <person name="Gygi S.P."/>
        </authorList>
    </citation>
    <scope>PHOSPHORYLATION [LARGE SCALE ANALYSIS] AT SER-336; THR-670; SER-673; SER-863 AND SER-866</scope>
    <scope>IDENTIFICATION BY MASS SPECTROMETRY [LARGE SCALE ANALYSIS]</scope>
    <source>
        <tissue>Brain</tissue>
        <tissue>Brown adipose tissue</tissue>
        <tissue>Heart</tissue>
        <tissue>Kidney</tissue>
        <tissue>Liver</tissue>
        <tissue>Lung</tissue>
        <tissue>Pancreas</tissue>
        <tissue>Spleen</tissue>
        <tissue>Testis</tissue>
    </source>
</reference>
<evidence type="ECO:0000250" key="1"/>
<evidence type="ECO:0000250" key="2">
    <source>
        <dbReference type="UniProtKB" id="Q58WW2"/>
    </source>
</evidence>
<evidence type="ECO:0000255" key="3">
    <source>
        <dbReference type="PROSITE-ProRule" id="PRU00116"/>
    </source>
</evidence>
<evidence type="ECO:0000256" key="4">
    <source>
        <dbReference type="SAM" id="MobiDB-lite"/>
    </source>
</evidence>
<evidence type="ECO:0007744" key="5">
    <source>
    </source>
</evidence>
<feature type="chain" id="PRO_0000304402" description="DDB1- and CUL4-associated factor 6">
    <location>
        <begin position="1"/>
        <end position="876"/>
    </location>
</feature>
<feature type="repeat" description="WD 1">
    <location>
        <begin position="49"/>
        <end position="88"/>
    </location>
</feature>
<feature type="repeat" description="WD 2">
    <location>
        <begin position="92"/>
        <end position="133"/>
    </location>
</feature>
<feature type="repeat" description="WD 3">
    <location>
        <begin position="139"/>
        <end position="179"/>
    </location>
</feature>
<feature type="repeat" description="WD 4">
    <location>
        <begin position="189"/>
        <end position="229"/>
    </location>
</feature>
<feature type="repeat" description="WD 5">
    <location>
        <begin position="251"/>
        <end position="290"/>
    </location>
</feature>
<feature type="domain" description="IQ" evidence="3">
    <location>
        <begin position="692"/>
        <end position="721"/>
    </location>
</feature>
<feature type="repeat" description="WD 6">
    <location>
        <begin position="734"/>
        <end position="772"/>
    </location>
</feature>
<feature type="repeat" description="WD 7">
    <location>
        <begin position="775"/>
        <end position="814"/>
    </location>
</feature>
<feature type="region of interest" description="Disordered" evidence="4">
    <location>
        <begin position="288"/>
        <end position="340"/>
    </location>
</feature>
<feature type="region of interest" description="Disordered" evidence="4">
    <location>
        <begin position="355"/>
        <end position="391"/>
    </location>
</feature>
<feature type="region of interest" description="Disordered" evidence="4">
    <location>
        <begin position="408"/>
        <end position="485"/>
    </location>
</feature>
<feature type="region of interest" description="Disordered" evidence="4">
    <location>
        <begin position="498"/>
        <end position="645"/>
    </location>
</feature>
<feature type="region of interest" description="Disordered" evidence="4">
    <location>
        <begin position="658"/>
        <end position="691"/>
    </location>
</feature>
<feature type="compositionally biased region" description="Basic and acidic residues" evidence="4">
    <location>
        <begin position="288"/>
        <end position="303"/>
    </location>
</feature>
<feature type="compositionally biased region" description="Basic and acidic residues" evidence="4">
    <location>
        <begin position="312"/>
        <end position="334"/>
    </location>
</feature>
<feature type="compositionally biased region" description="Polar residues" evidence="4">
    <location>
        <begin position="375"/>
        <end position="391"/>
    </location>
</feature>
<feature type="compositionally biased region" description="Polar residues" evidence="4">
    <location>
        <begin position="409"/>
        <end position="422"/>
    </location>
</feature>
<feature type="compositionally biased region" description="Basic and acidic residues" evidence="4">
    <location>
        <begin position="456"/>
        <end position="466"/>
    </location>
</feature>
<feature type="compositionally biased region" description="Low complexity" evidence="4">
    <location>
        <begin position="499"/>
        <end position="510"/>
    </location>
</feature>
<feature type="compositionally biased region" description="Basic and acidic residues" evidence="4">
    <location>
        <begin position="534"/>
        <end position="544"/>
    </location>
</feature>
<feature type="compositionally biased region" description="Polar residues" evidence="4">
    <location>
        <begin position="550"/>
        <end position="562"/>
    </location>
</feature>
<feature type="compositionally biased region" description="Polar residues" evidence="4">
    <location>
        <begin position="571"/>
        <end position="584"/>
    </location>
</feature>
<feature type="compositionally biased region" description="Polar residues" evidence="4">
    <location>
        <begin position="603"/>
        <end position="613"/>
    </location>
</feature>
<feature type="compositionally biased region" description="Polar residues" evidence="4">
    <location>
        <begin position="621"/>
        <end position="645"/>
    </location>
</feature>
<feature type="modified residue" description="Phosphoserine" evidence="5">
    <location>
        <position position="336"/>
    </location>
</feature>
<feature type="modified residue" description="Phosphoserine" evidence="2">
    <location>
        <position position="665"/>
    </location>
</feature>
<feature type="modified residue" description="Phosphothreonine" evidence="5">
    <location>
        <position position="670"/>
    </location>
</feature>
<feature type="modified residue" description="Phosphoserine" evidence="5">
    <location>
        <position position="673"/>
    </location>
</feature>
<feature type="modified residue" description="Phosphoserine" evidence="5">
    <location>
        <position position="863"/>
    </location>
</feature>
<feature type="modified residue" description="Phosphoserine" evidence="5">
    <location>
        <position position="866"/>
    </location>
</feature>
<gene>
    <name type="primary">Dcaf6</name>
    <name type="synonym">Iqwd1</name>
</gene>
<protein>
    <recommendedName>
        <fullName>DDB1- and CUL4-associated factor 6</fullName>
    </recommendedName>
    <alternativeName>
        <fullName>IQ motif and WD repeat-containing protein 1</fullName>
    </alternativeName>
    <alternativeName>
        <fullName>Nuclear receptor interaction protein</fullName>
        <shortName>NRIP</shortName>
    </alternativeName>
</protein>
<comment type="function">
    <text evidence="1">Ligand-dependent coactivator of nuclear receptors. Enhance transcriptional activity of the nuclear receptors NR3C1 and AR. May function as a substrate receptor for CUL4-DDB1 E3 ubiquitin-protein ligase complex (By similarity).</text>
</comment>
<comment type="pathway">
    <text>Protein modification; protein ubiquitination.</text>
</comment>
<comment type="subunit">
    <text evidence="1">Interacts with the nuclear receptors NR3C1 and AR in the presence of ligand. Interacts with DDB1, CUL4A and CUL4B (By similarity).</text>
</comment>
<comment type="subcellular location">
    <subcellularLocation>
        <location evidence="1">Nucleus</location>
    </subcellularLocation>
</comment>
<dbReference type="EMBL" id="AK004618">
    <property type="protein sequence ID" value="BAB23414.1"/>
    <property type="molecule type" value="mRNA"/>
</dbReference>
<dbReference type="EMBL" id="AK077238">
    <property type="protein sequence ID" value="BAC36701.1"/>
    <property type="molecule type" value="mRNA"/>
</dbReference>
<dbReference type="CCDS" id="CCDS48424.1"/>
<dbReference type="RefSeq" id="NP_083035.1">
    <property type="nucleotide sequence ID" value="NM_028759.1"/>
</dbReference>
<dbReference type="SMR" id="Q9DC22"/>
<dbReference type="BioGRID" id="216497">
    <property type="interactions" value="13"/>
</dbReference>
<dbReference type="FunCoup" id="Q9DC22">
    <property type="interactions" value="955"/>
</dbReference>
<dbReference type="IntAct" id="Q9DC22">
    <property type="interactions" value="2"/>
</dbReference>
<dbReference type="STRING" id="10090.ENSMUSP00000027856"/>
<dbReference type="GlyGen" id="Q9DC22">
    <property type="glycosylation" value="1 site, 1 N-linked glycan (1 site)"/>
</dbReference>
<dbReference type="iPTMnet" id="Q9DC22"/>
<dbReference type="PhosphoSitePlus" id="Q9DC22"/>
<dbReference type="SwissPalm" id="Q9DC22"/>
<dbReference type="jPOST" id="Q9DC22"/>
<dbReference type="PaxDb" id="10090-ENSMUSP00000027856"/>
<dbReference type="PeptideAtlas" id="Q9DC22"/>
<dbReference type="ProteomicsDB" id="277960"/>
<dbReference type="Pumba" id="Q9DC22"/>
<dbReference type="Antibodypedia" id="34346">
    <property type="antibodies" value="148 antibodies from 26 providers"/>
</dbReference>
<dbReference type="Ensembl" id="ENSMUST00000027856.13">
    <property type="protein sequence ID" value="ENSMUSP00000027856.8"/>
    <property type="gene ID" value="ENSMUSG00000026571.13"/>
</dbReference>
<dbReference type="GeneID" id="74106"/>
<dbReference type="KEGG" id="mmu:74106"/>
<dbReference type="UCSC" id="uc007djb.2">
    <property type="organism name" value="mouse"/>
</dbReference>
<dbReference type="AGR" id="MGI:1921356"/>
<dbReference type="CTD" id="55827"/>
<dbReference type="MGI" id="MGI:1921356">
    <property type="gene designation" value="Dcaf6"/>
</dbReference>
<dbReference type="VEuPathDB" id="HostDB:ENSMUSG00000026571"/>
<dbReference type="eggNOG" id="KOG1310">
    <property type="taxonomic scope" value="Eukaryota"/>
</dbReference>
<dbReference type="eggNOG" id="KOG1334">
    <property type="taxonomic scope" value="Eukaryota"/>
</dbReference>
<dbReference type="GeneTree" id="ENSGT00950000182900"/>
<dbReference type="HOGENOM" id="CLU_012381_0_1_1"/>
<dbReference type="InParanoid" id="Q9DC22"/>
<dbReference type="OMA" id="FRVRYGN"/>
<dbReference type="OrthoDB" id="4869960at2759"/>
<dbReference type="PhylomeDB" id="Q9DC22"/>
<dbReference type="TreeFam" id="TF326071"/>
<dbReference type="Reactome" id="R-MMU-8951664">
    <property type="pathway name" value="Neddylation"/>
</dbReference>
<dbReference type="UniPathway" id="UPA00143"/>
<dbReference type="BioGRID-ORCS" id="74106">
    <property type="hits" value="2 hits in 76 CRISPR screens"/>
</dbReference>
<dbReference type="ChiTaRS" id="Dcaf6">
    <property type="organism name" value="mouse"/>
</dbReference>
<dbReference type="PRO" id="PR:Q9DC22"/>
<dbReference type="Proteomes" id="UP000000589">
    <property type="component" value="Chromosome 1"/>
</dbReference>
<dbReference type="RNAct" id="Q9DC22">
    <property type="molecule type" value="protein"/>
</dbReference>
<dbReference type="Bgee" id="ENSMUSG00000026571">
    <property type="expression patterns" value="Expressed in spermatocyte and 219 other cell types or tissues"/>
</dbReference>
<dbReference type="ExpressionAtlas" id="Q9DC22">
    <property type="expression patterns" value="baseline and differential"/>
</dbReference>
<dbReference type="GO" id="GO:0080008">
    <property type="term" value="C:Cul4-RING E3 ubiquitin ligase complex"/>
    <property type="evidence" value="ECO:0000250"/>
    <property type="project" value="UniProtKB"/>
</dbReference>
<dbReference type="GO" id="GO:0005829">
    <property type="term" value="C:cytosol"/>
    <property type="evidence" value="ECO:0007669"/>
    <property type="project" value="Ensembl"/>
</dbReference>
<dbReference type="GO" id="GO:0005654">
    <property type="term" value="C:nucleoplasm"/>
    <property type="evidence" value="ECO:0007669"/>
    <property type="project" value="Ensembl"/>
</dbReference>
<dbReference type="GO" id="GO:0005634">
    <property type="term" value="C:nucleus"/>
    <property type="evidence" value="ECO:0000266"/>
    <property type="project" value="MGI"/>
</dbReference>
<dbReference type="GO" id="GO:0003713">
    <property type="term" value="F:transcription coactivator activity"/>
    <property type="evidence" value="ECO:0000266"/>
    <property type="project" value="MGI"/>
</dbReference>
<dbReference type="GO" id="GO:0045944">
    <property type="term" value="P:positive regulation of transcription by RNA polymerase II"/>
    <property type="evidence" value="ECO:0000266"/>
    <property type="project" value="MGI"/>
</dbReference>
<dbReference type="GO" id="GO:0016567">
    <property type="term" value="P:protein ubiquitination"/>
    <property type="evidence" value="ECO:0007669"/>
    <property type="project" value="UniProtKB-UniPathway"/>
</dbReference>
<dbReference type="FunFam" id="2.130.10.10:FF:000078">
    <property type="entry name" value="DDB1- and CUL4-associated factor 6 isoform X1"/>
    <property type="match status" value="1"/>
</dbReference>
<dbReference type="FunFam" id="2.130.10.10:FF:000045">
    <property type="entry name" value="DDB1- and CUL4-associated factor 6 isoform X2"/>
    <property type="match status" value="1"/>
</dbReference>
<dbReference type="Gene3D" id="2.130.10.10">
    <property type="entry name" value="YVTN repeat-like/Quinoprotein amine dehydrogenase"/>
    <property type="match status" value="2"/>
</dbReference>
<dbReference type="InterPro" id="IPR045151">
    <property type="entry name" value="DCAF8"/>
</dbReference>
<dbReference type="InterPro" id="IPR015943">
    <property type="entry name" value="WD40/YVTN_repeat-like_dom_sf"/>
</dbReference>
<dbReference type="InterPro" id="IPR036322">
    <property type="entry name" value="WD40_repeat_dom_sf"/>
</dbReference>
<dbReference type="InterPro" id="IPR001680">
    <property type="entry name" value="WD40_rpt"/>
</dbReference>
<dbReference type="PANTHER" id="PTHR15574:SF39">
    <property type="entry name" value="DDB1- AND CUL4-ASSOCIATED FACTOR 6"/>
    <property type="match status" value="1"/>
</dbReference>
<dbReference type="PANTHER" id="PTHR15574">
    <property type="entry name" value="WD REPEAT DOMAIN-CONTAINING FAMILY"/>
    <property type="match status" value="1"/>
</dbReference>
<dbReference type="Pfam" id="PF00400">
    <property type="entry name" value="WD40"/>
    <property type="match status" value="3"/>
</dbReference>
<dbReference type="SMART" id="SM00320">
    <property type="entry name" value="WD40"/>
    <property type="match status" value="7"/>
</dbReference>
<dbReference type="SUPFAM" id="SSF50978">
    <property type="entry name" value="WD40 repeat-like"/>
    <property type="match status" value="1"/>
</dbReference>
<dbReference type="PROSITE" id="PS50096">
    <property type="entry name" value="IQ"/>
    <property type="match status" value="1"/>
</dbReference>
<dbReference type="PROSITE" id="PS50294">
    <property type="entry name" value="WD_REPEATS_REGION"/>
    <property type="match status" value="2"/>
</dbReference>
<keyword id="KW-0539">Nucleus</keyword>
<keyword id="KW-0597">Phosphoprotein</keyword>
<keyword id="KW-1185">Reference proteome</keyword>
<keyword id="KW-0677">Repeat</keyword>
<keyword id="KW-0833">Ubl conjugation pathway</keyword>
<keyword id="KW-0853">WD repeat</keyword>
<name>DCAF6_MOUSE</name>
<accession>Q9DC22</accession>
<accession>Q8BK50</accession>
<organism>
    <name type="scientific">Mus musculus</name>
    <name type="common">Mouse</name>
    <dbReference type="NCBI Taxonomy" id="10090"/>
    <lineage>
        <taxon>Eukaryota</taxon>
        <taxon>Metazoa</taxon>
        <taxon>Chordata</taxon>
        <taxon>Craniata</taxon>
        <taxon>Vertebrata</taxon>
        <taxon>Euteleostomi</taxon>
        <taxon>Mammalia</taxon>
        <taxon>Eutheria</taxon>
        <taxon>Euarchontoglires</taxon>
        <taxon>Glires</taxon>
        <taxon>Rodentia</taxon>
        <taxon>Myomorpha</taxon>
        <taxon>Muroidea</taxon>
        <taxon>Muridae</taxon>
        <taxon>Murinae</taxon>
        <taxon>Mus</taxon>
        <taxon>Mus</taxon>
    </lineage>
</organism>
<proteinExistence type="evidence at protein level"/>